<sequence>MSTLTLSNITKSYPNGYQAVHKLSLNIEDGEMVVLVGPSGCGKSTLLRMIAGLEEITSGKLKIDDCLVNNLEPSERDIAMVFQNYALYPHMSVYDNMAYGLRNRKTPKADIQRIVNDTAEMLEIDHLLERKPKELSGGQRQRVAMGRAIVRKPKIFLFDEPLSNLDAKLRVQMRLQIKKLQRRLATTSVYVTHDQVEAMTLADKLVVLNQGTVEQVGTPLEIYDNPASVFVATFIGSPAMNILDAKVTNKGLTLGSSLSPIDTQSLKPGDIKLGLRPEHINIVEKSPWFEVEVELIESLGADLLLYCKTLDCKEMDETDQNLVVRAEGHSKIEIGDILGLDIDQKHLHLFDADTSKHIEIDLKMNDQKELLYA</sequence>
<reference key="1">
    <citation type="journal article" date="2008" name="BMC Genomics">
        <title>Genomics of an extreme psychrophile, Psychromonas ingrahamii.</title>
        <authorList>
            <person name="Riley M."/>
            <person name="Staley J.T."/>
            <person name="Danchin A."/>
            <person name="Wang T.Z."/>
            <person name="Brettin T.S."/>
            <person name="Hauser L.J."/>
            <person name="Land M.L."/>
            <person name="Thompson L.S."/>
        </authorList>
    </citation>
    <scope>NUCLEOTIDE SEQUENCE [LARGE SCALE GENOMIC DNA]</scope>
    <source>
        <strain>DSM 17664 / CCUG 51855 / 37</strain>
    </source>
</reference>
<comment type="function">
    <text evidence="1">Part of the ABC transporter complex UgpBAEC involved in sn-glycerol-3-phosphate (G3P) import. Responsible for energy coupling to the transport system.</text>
</comment>
<comment type="catalytic activity">
    <reaction evidence="1">
        <text>sn-glycerol 3-phosphate(out) + ATP + H2O = sn-glycerol 3-phosphate(in) + ADP + phosphate + H(+)</text>
        <dbReference type="Rhea" id="RHEA:21668"/>
        <dbReference type="ChEBI" id="CHEBI:15377"/>
        <dbReference type="ChEBI" id="CHEBI:15378"/>
        <dbReference type="ChEBI" id="CHEBI:30616"/>
        <dbReference type="ChEBI" id="CHEBI:43474"/>
        <dbReference type="ChEBI" id="CHEBI:57597"/>
        <dbReference type="ChEBI" id="CHEBI:456216"/>
        <dbReference type="EC" id="7.6.2.10"/>
    </reaction>
</comment>
<comment type="subunit">
    <text evidence="1">The complex is composed of two ATP-binding proteins (UgpC), two transmembrane proteins (UgpA and UgpE) and a solute-binding protein (UgpB).</text>
</comment>
<comment type="subcellular location">
    <subcellularLocation>
        <location evidence="1">Cell inner membrane</location>
        <topology evidence="1">Peripheral membrane protein</topology>
    </subcellularLocation>
</comment>
<comment type="similarity">
    <text evidence="1">Belongs to the ABC transporter superfamily. sn-glycerol-3-phosphate importer (TC 3.A.1.1.3) family.</text>
</comment>
<organism>
    <name type="scientific">Psychromonas ingrahamii (strain DSM 17664 / CCUG 51855 / 37)</name>
    <dbReference type="NCBI Taxonomy" id="357804"/>
    <lineage>
        <taxon>Bacteria</taxon>
        <taxon>Pseudomonadati</taxon>
        <taxon>Pseudomonadota</taxon>
        <taxon>Gammaproteobacteria</taxon>
        <taxon>Alteromonadales</taxon>
        <taxon>Psychromonadaceae</taxon>
        <taxon>Psychromonas</taxon>
    </lineage>
</organism>
<evidence type="ECO:0000255" key="1">
    <source>
        <dbReference type="HAMAP-Rule" id="MF_01727"/>
    </source>
</evidence>
<dbReference type="EC" id="7.6.2.10" evidence="1"/>
<dbReference type="EMBL" id="CP000510">
    <property type="protein sequence ID" value="ABM03844.1"/>
    <property type="molecule type" value="Genomic_DNA"/>
</dbReference>
<dbReference type="RefSeq" id="WP_011770404.1">
    <property type="nucleotide sequence ID" value="NC_008709.1"/>
</dbReference>
<dbReference type="SMR" id="A1SWH9"/>
<dbReference type="STRING" id="357804.Ping_2096"/>
<dbReference type="KEGG" id="pin:Ping_2096"/>
<dbReference type="eggNOG" id="COG3842">
    <property type="taxonomic scope" value="Bacteria"/>
</dbReference>
<dbReference type="HOGENOM" id="CLU_000604_1_1_6"/>
<dbReference type="OrthoDB" id="9802264at2"/>
<dbReference type="Proteomes" id="UP000000639">
    <property type="component" value="Chromosome"/>
</dbReference>
<dbReference type="GO" id="GO:0055052">
    <property type="term" value="C:ATP-binding cassette (ABC) transporter complex, substrate-binding subunit-containing"/>
    <property type="evidence" value="ECO:0007669"/>
    <property type="project" value="TreeGrafter"/>
</dbReference>
<dbReference type="GO" id="GO:0015430">
    <property type="term" value="F:ABC-type glycerol-3-phosphate transporter activity"/>
    <property type="evidence" value="ECO:0007669"/>
    <property type="project" value="UniProtKB-EC"/>
</dbReference>
<dbReference type="GO" id="GO:0005524">
    <property type="term" value="F:ATP binding"/>
    <property type="evidence" value="ECO:0007669"/>
    <property type="project" value="UniProtKB-KW"/>
</dbReference>
<dbReference type="GO" id="GO:0016887">
    <property type="term" value="F:ATP hydrolysis activity"/>
    <property type="evidence" value="ECO:0007669"/>
    <property type="project" value="InterPro"/>
</dbReference>
<dbReference type="GO" id="GO:0008643">
    <property type="term" value="P:carbohydrate transport"/>
    <property type="evidence" value="ECO:0007669"/>
    <property type="project" value="InterPro"/>
</dbReference>
<dbReference type="CDD" id="cd03301">
    <property type="entry name" value="ABC_MalK_N"/>
    <property type="match status" value="1"/>
</dbReference>
<dbReference type="FunFam" id="3.40.50.300:FF:000042">
    <property type="entry name" value="Maltose/maltodextrin ABC transporter, ATP-binding protein"/>
    <property type="match status" value="1"/>
</dbReference>
<dbReference type="Gene3D" id="2.40.50.100">
    <property type="match status" value="1"/>
</dbReference>
<dbReference type="Gene3D" id="2.40.50.140">
    <property type="entry name" value="Nucleic acid-binding proteins"/>
    <property type="match status" value="1"/>
</dbReference>
<dbReference type="Gene3D" id="3.40.50.300">
    <property type="entry name" value="P-loop containing nucleotide triphosphate hydrolases"/>
    <property type="match status" value="1"/>
</dbReference>
<dbReference type="InterPro" id="IPR003593">
    <property type="entry name" value="AAA+_ATPase"/>
</dbReference>
<dbReference type="InterPro" id="IPR003439">
    <property type="entry name" value="ABC_transporter-like_ATP-bd"/>
</dbReference>
<dbReference type="InterPro" id="IPR017871">
    <property type="entry name" value="ABC_transporter-like_CS"/>
</dbReference>
<dbReference type="InterPro" id="IPR015855">
    <property type="entry name" value="ABC_transpr_MalK-like"/>
</dbReference>
<dbReference type="InterPro" id="IPR047641">
    <property type="entry name" value="ABC_transpr_MalK/UgpC-like"/>
</dbReference>
<dbReference type="InterPro" id="IPR008995">
    <property type="entry name" value="Mo/tungstate-bd_C_term_dom"/>
</dbReference>
<dbReference type="InterPro" id="IPR012340">
    <property type="entry name" value="NA-bd_OB-fold"/>
</dbReference>
<dbReference type="InterPro" id="IPR040582">
    <property type="entry name" value="OB_MalK-like"/>
</dbReference>
<dbReference type="InterPro" id="IPR027417">
    <property type="entry name" value="P-loop_NTPase"/>
</dbReference>
<dbReference type="NCBIfam" id="NF008653">
    <property type="entry name" value="PRK11650.1"/>
    <property type="match status" value="1"/>
</dbReference>
<dbReference type="PANTHER" id="PTHR43875">
    <property type="entry name" value="MALTODEXTRIN IMPORT ATP-BINDING PROTEIN MSMX"/>
    <property type="match status" value="1"/>
</dbReference>
<dbReference type="PANTHER" id="PTHR43875:SF15">
    <property type="entry name" value="TREHALOSE IMPORT ATP-BINDING PROTEIN SUGC"/>
    <property type="match status" value="1"/>
</dbReference>
<dbReference type="Pfam" id="PF00005">
    <property type="entry name" value="ABC_tran"/>
    <property type="match status" value="1"/>
</dbReference>
<dbReference type="Pfam" id="PF17912">
    <property type="entry name" value="OB_MalK"/>
    <property type="match status" value="1"/>
</dbReference>
<dbReference type="SMART" id="SM00382">
    <property type="entry name" value="AAA"/>
    <property type="match status" value="1"/>
</dbReference>
<dbReference type="SUPFAM" id="SSF50331">
    <property type="entry name" value="MOP-like"/>
    <property type="match status" value="1"/>
</dbReference>
<dbReference type="SUPFAM" id="SSF52540">
    <property type="entry name" value="P-loop containing nucleoside triphosphate hydrolases"/>
    <property type="match status" value="1"/>
</dbReference>
<dbReference type="PROSITE" id="PS00211">
    <property type="entry name" value="ABC_TRANSPORTER_1"/>
    <property type="match status" value="1"/>
</dbReference>
<dbReference type="PROSITE" id="PS50893">
    <property type="entry name" value="ABC_TRANSPORTER_2"/>
    <property type="match status" value="1"/>
</dbReference>
<dbReference type="PROSITE" id="PS51315">
    <property type="entry name" value="UGPC"/>
    <property type="match status" value="1"/>
</dbReference>
<proteinExistence type="inferred from homology"/>
<name>UGPC_PSYIN</name>
<accession>A1SWH9</accession>
<keyword id="KW-0067">ATP-binding</keyword>
<keyword id="KW-0997">Cell inner membrane</keyword>
<keyword id="KW-1003">Cell membrane</keyword>
<keyword id="KW-0472">Membrane</keyword>
<keyword id="KW-0547">Nucleotide-binding</keyword>
<keyword id="KW-1185">Reference proteome</keyword>
<keyword id="KW-0762">Sugar transport</keyword>
<keyword id="KW-1278">Translocase</keyword>
<keyword id="KW-0813">Transport</keyword>
<feature type="chain" id="PRO_0000289757" description="sn-glycerol-3-phosphate import ATP-binding protein UgpC">
    <location>
        <begin position="1"/>
        <end position="373"/>
    </location>
</feature>
<feature type="domain" description="ABC transporter" evidence="1">
    <location>
        <begin position="4"/>
        <end position="235"/>
    </location>
</feature>
<feature type="binding site" evidence="1">
    <location>
        <begin position="37"/>
        <end position="44"/>
    </location>
    <ligand>
        <name>ATP</name>
        <dbReference type="ChEBI" id="CHEBI:30616"/>
    </ligand>
</feature>
<gene>
    <name evidence="1" type="primary">ugpC</name>
    <name type="ordered locus">Ping_2096</name>
</gene>
<protein>
    <recommendedName>
        <fullName evidence="1">sn-glycerol-3-phosphate import ATP-binding protein UgpC</fullName>
        <ecNumber evidence="1">7.6.2.10</ecNumber>
    </recommendedName>
</protein>